<reference key="1">
    <citation type="journal article" date="1995" name="J. Biochem.">
        <title>Protease II from Moraxella lacunata: cloning, sequencing, and expression of the enzyme gene, and crystallization of the expressed enzyme.</title>
        <authorList>
            <person name="Yoshimoto T."/>
            <person name="Tabira J."/>
            <person name="Kabashima T."/>
            <person name="Inoue S."/>
            <person name="Ito K."/>
        </authorList>
    </citation>
    <scope>NUCLEOTIDE SEQUENCE [GENOMIC DNA]</scope>
</reference>
<protein>
    <recommendedName>
        <fullName>Protease 2</fullName>
        <ecNumber>3.4.21.83</ecNumber>
    </recommendedName>
    <alternativeName>
        <fullName>Oligopeptidase B</fullName>
    </alternativeName>
    <alternativeName>
        <fullName>Protease II</fullName>
    </alternativeName>
</protein>
<organism>
    <name type="scientific">Moraxella lacunata</name>
    <dbReference type="NCBI Taxonomy" id="477"/>
    <lineage>
        <taxon>Bacteria</taxon>
        <taxon>Pseudomonadati</taxon>
        <taxon>Pseudomonadota</taxon>
        <taxon>Gammaproteobacteria</taxon>
        <taxon>Moraxellales</taxon>
        <taxon>Moraxellaceae</taxon>
        <taxon>Moraxella</taxon>
    </lineage>
</organism>
<proteinExistence type="inferred from homology"/>
<comment type="function">
    <text>Cleaves peptide bonds on the C-terminal side of lysyl and argininyl residues.</text>
</comment>
<comment type="catalytic activity">
    <reaction>
        <text>Hydrolysis of -Arg-|-Xaa- and -Lys-|-Xaa- bonds in oligopeptides, even when P1' residue is proline.</text>
        <dbReference type="EC" id="3.4.21.83"/>
    </reaction>
</comment>
<comment type="similarity">
    <text evidence="2">Belongs to the peptidase S9A family.</text>
</comment>
<name>PTRB_MORLA</name>
<feature type="chain" id="PRO_0000122405" description="Protease 2">
    <location>
        <begin position="1"/>
        <end position="690"/>
    </location>
</feature>
<feature type="active site" description="Charge relay system" evidence="1">
    <location>
        <position position="534"/>
    </location>
</feature>
<feature type="active site" description="Charge relay system" evidence="1">
    <location>
        <position position="619"/>
    </location>
</feature>
<feature type="active site" description="Charge relay system" evidence="1">
    <location>
        <position position="654"/>
    </location>
</feature>
<dbReference type="EC" id="3.4.21.83"/>
<dbReference type="EMBL" id="D38405">
    <property type="protein sequence ID" value="BAA07460.1"/>
    <property type="molecule type" value="Genomic_DNA"/>
</dbReference>
<dbReference type="PIR" id="JC4185">
    <property type="entry name" value="JC4185"/>
</dbReference>
<dbReference type="SMR" id="Q59536"/>
<dbReference type="ESTHER" id="morla-ptrb">
    <property type="family name" value="S9N_PREPL_Peptidase_S9"/>
</dbReference>
<dbReference type="MEROPS" id="S09.010"/>
<dbReference type="BRENDA" id="3.4.21.83">
    <property type="organism ID" value="9781"/>
</dbReference>
<dbReference type="GO" id="GO:0004252">
    <property type="term" value="F:serine-type endopeptidase activity"/>
    <property type="evidence" value="ECO:0007669"/>
    <property type="project" value="UniProtKB-EC"/>
</dbReference>
<dbReference type="GO" id="GO:0006508">
    <property type="term" value="P:proteolysis"/>
    <property type="evidence" value="ECO:0007669"/>
    <property type="project" value="UniProtKB-KW"/>
</dbReference>
<dbReference type="Gene3D" id="3.40.50.1820">
    <property type="entry name" value="alpha/beta hydrolase"/>
    <property type="match status" value="1"/>
</dbReference>
<dbReference type="Gene3D" id="2.130.10.120">
    <property type="entry name" value="Prolyl oligopeptidase, N-terminal domain"/>
    <property type="match status" value="1"/>
</dbReference>
<dbReference type="InterPro" id="IPR029058">
    <property type="entry name" value="AB_hydrolase_fold"/>
</dbReference>
<dbReference type="InterPro" id="IPR002471">
    <property type="entry name" value="Pept_S9_AS"/>
</dbReference>
<dbReference type="InterPro" id="IPR023302">
    <property type="entry name" value="Pept_S9A_N"/>
</dbReference>
<dbReference type="InterPro" id="IPR001375">
    <property type="entry name" value="Peptidase_S9_cat"/>
</dbReference>
<dbReference type="InterPro" id="IPR002470">
    <property type="entry name" value="Peptidase_S9A"/>
</dbReference>
<dbReference type="InterPro" id="IPR051543">
    <property type="entry name" value="Serine_Peptidase_S9A"/>
</dbReference>
<dbReference type="PANTHER" id="PTHR11757:SF19">
    <property type="entry name" value="PROLYL ENDOPEPTIDASE-LIKE"/>
    <property type="match status" value="1"/>
</dbReference>
<dbReference type="PANTHER" id="PTHR11757">
    <property type="entry name" value="PROTEASE FAMILY S9A OLIGOPEPTIDASE"/>
    <property type="match status" value="1"/>
</dbReference>
<dbReference type="Pfam" id="PF00326">
    <property type="entry name" value="Peptidase_S9"/>
    <property type="match status" value="1"/>
</dbReference>
<dbReference type="Pfam" id="PF02897">
    <property type="entry name" value="Peptidase_S9_N"/>
    <property type="match status" value="1"/>
</dbReference>
<dbReference type="PRINTS" id="PR00862">
    <property type="entry name" value="PROLIGOPTASE"/>
</dbReference>
<dbReference type="SUPFAM" id="SSF53474">
    <property type="entry name" value="alpha/beta-Hydrolases"/>
    <property type="match status" value="1"/>
</dbReference>
<dbReference type="SUPFAM" id="SSF50993">
    <property type="entry name" value="Peptidase/esterase 'gauge' domain"/>
    <property type="match status" value="1"/>
</dbReference>
<dbReference type="PROSITE" id="PS00708">
    <property type="entry name" value="PRO_ENDOPEP_SER"/>
    <property type="match status" value="1"/>
</dbReference>
<gene>
    <name type="primary">ptrB</name>
</gene>
<evidence type="ECO:0000255" key="1">
    <source>
        <dbReference type="PROSITE-ProRule" id="PRU10084"/>
    </source>
</evidence>
<evidence type="ECO:0000305" key="2"/>
<accession>Q59536</accession>
<sequence>MKLPIAKRIPHPHELHGDVREDDYYWLKDRDNTEVIQYLEEENRYYHEIMRPLQEQTEQIYESMVDRVPDSEMKVPVQHGQFFYYSRLDKNKQYPIYARKQAASRALLQDATEEVVLDLNELAEEDDYLSVTVQRMTTDHSRLAYLENRDGTDRYTIYIKDLNTGELLSDRVPNVYIYGSMEWCRCGDYIFYTTVDEHQRPCQLWRHRLGSDVESDELIFEEKDDTFTLFISKSQSGKFIFVYSSSKTTSEIHMIDTDSPLSPLQLVDERRDGILYDVEHWEDDLLILTNEGALNFQLLRCPLNDLSSKVNVVEYNEERYLQEMYPFRDKLLIAGRENGLTQIWVVHDGELQQISWDEPLYTVAVLSEQSYDTNEVLIQYESLLTPKTTFGLNLQTGEKQCLQVAPVSGEYDRSQFRQEQLWATGRSGVKVPMTAVYLEGALDNGPAPLILYGYGSYGSNSDPRFDPYRLPLLEKGIVFVTAQVRGGSEMGRGWYEDGKMQNKRNTFTDFIAAAKHLIDQNYTSPTKMAARGGSAGGLLVGAVANMAGELFKVIVPAVPFVDVVTTMLDTSIPLTTLEWDEWGDPRKQEDYFYMKSYSPYDNVEAKDYPHMYITTGINDPRVGYFEPAKWVARLRAVKTDNNTLVMKTNMGAGHFGKSGRFNHLKEAAESYAFILDKLGVEAEEKVLNHR</sequence>
<keyword id="KW-0378">Hydrolase</keyword>
<keyword id="KW-0645">Protease</keyword>
<keyword id="KW-0720">Serine protease</keyword>